<dbReference type="EC" id="3.4.23.-"/>
<dbReference type="EMBL" id="AY243479">
    <property type="protein sequence ID" value="AAP72988.1"/>
    <property type="molecule type" value="mRNA"/>
</dbReference>
<dbReference type="EMBL" id="AC051625">
    <property type="status" value="NOT_ANNOTATED_CDS"/>
    <property type="molecule type" value="Genomic_DNA"/>
</dbReference>
<dbReference type="EMBL" id="CP002688">
    <property type="protein sequence ID" value="AED93896.1"/>
    <property type="molecule type" value="Genomic_DNA"/>
</dbReference>
<dbReference type="EMBL" id="DQ446998">
    <property type="protein sequence ID" value="ABE66189.1"/>
    <property type="molecule type" value="mRNA"/>
</dbReference>
<dbReference type="EMBL" id="DQ653316">
    <property type="protein sequence ID" value="ABK28718.1"/>
    <property type="status" value="ALT_SEQ"/>
    <property type="molecule type" value="mRNA"/>
</dbReference>
<dbReference type="EMBL" id="BT026129">
    <property type="protein sequence ID" value="ABG48485.1"/>
    <property type="molecule type" value="mRNA"/>
</dbReference>
<dbReference type="RefSeq" id="NP_198319.1">
    <property type="nucleotide sequence ID" value="NM_122858.3"/>
</dbReference>
<dbReference type="SMR" id="Q6XBF8"/>
<dbReference type="FunCoup" id="Q6XBF8">
    <property type="interactions" value="78"/>
</dbReference>
<dbReference type="STRING" id="3702.Q6XBF8"/>
<dbReference type="MEROPS" id="A01.069"/>
<dbReference type="GlyCosmos" id="Q6XBF8">
    <property type="glycosylation" value="1 site, No reported glycans"/>
</dbReference>
<dbReference type="GlyGen" id="Q6XBF8">
    <property type="glycosylation" value="1 site"/>
</dbReference>
<dbReference type="iPTMnet" id="Q6XBF8"/>
<dbReference type="PaxDb" id="3702-AT5G33340.1"/>
<dbReference type="ProteomicsDB" id="223971"/>
<dbReference type="EnsemblPlants" id="AT5G33340.1">
    <property type="protein sequence ID" value="AT5G33340.1"/>
    <property type="gene ID" value="AT5G33340"/>
</dbReference>
<dbReference type="GeneID" id="833310"/>
<dbReference type="Gramene" id="AT5G33340.1">
    <property type="protein sequence ID" value="AT5G33340.1"/>
    <property type="gene ID" value="AT5G33340"/>
</dbReference>
<dbReference type="KEGG" id="ath:AT5G33340"/>
<dbReference type="Araport" id="AT5G33340"/>
<dbReference type="TAIR" id="AT5G33340">
    <property type="gene designation" value="CDR1"/>
</dbReference>
<dbReference type="eggNOG" id="KOG1339">
    <property type="taxonomic scope" value="Eukaryota"/>
</dbReference>
<dbReference type="HOGENOM" id="CLU_005738_1_3_1"/>
<dbReference type="InParanoid" id="Q6XBF8"/>
<dbReference type="OMA" id="TYKTFSC"/>
<dbReference type="PhylomeDB" id="Q6XBF8"/>
<dbReference type="PRO" id="PR:Q6XBF8"/>
<dbReference type="Proteomes" id="UP000006548">
    <property type="component" value="Chromosome 5"/>
</dbReference>
<dbReference type="ExpressionAtlas" id="Q6XBF8">
    <property type="expression patterns" value="baseline and differential"/>
</dbReference>
<dbReference type="GO" id="GO:0048046">
    <property type="term" value="C:apoplast"/>
    <property type="evidence" value="ECO:0000314"/>
    <property type="project" value="TAIR"/>
</dbReference>
<dbReference type="GO" id="GO:0004190">
    <property type="term" value="F:aspartic-type endopeptidase activity"/>
    <property type="evidence" value="ECO:0000314"/>
    <property type="project" value="TAIR"/>
</dbReference>
<dbReference type="GO" id="GO:0042742">
    <property type="term" value="P:defense response to bacterium"/>
    <property type="evidence" value="ECO:0000315"/>
    <property type="project" value="TAIR"/>
</dbReference>
<dbReference type="GO" id="GO:0006508">
    <property type="term" value="P:proteolysis"/>
    <property type="evidence" value="ECO:0007669"/>
    <property type="project" value="UniProtKB-KW"/>
</dbReference>
<dbReference type="GO" id="GO:0010310">
    <property type="term" value="P:regulation of hydrogen peroxide metabolic process"/>
    <property type="evidence" value="ECO:0000314"/>
    <property type="project" value="TAIR"/>
</dbReference>
<dbReference type="GO" id="GO:0010337">
    <property type="term" value="P:regulation of salicylic acid metabolic process"/>
    <property type="evidence" value="ECO:0000315"/>
    <property type="project" value="TAIR"/>
</dbReference>
<dbReference type="CDD" id="cd05476">
    <property type="entry name" value="pepsin_A_like_plant"/>
    <property type="match status" value="1"/>
</dbReference>
<dbReference type="FunFam" id="2.40.70.10:FF:000050">
    <property type="entry name" value="Aspartic proteinase CDR1"/>
    <property type="match status" value="1"/>
</dbReference>
<dbReference type="FunFam" id="2.40.70.10:FF:000016">
    <property type="entry name" value="Probable aspartic protease At2g35615"/>
    <property type="match status" value="1"/>
</dbReference>
<dbReference type="Gene3D" id="2.40.70.10">
    <property type="entry name" value="Acid Proteases"/>
    <property type="match status" value="2"/>
</dbReference>
<dbReference type="InterPro" id="IPR001969">
    <property type="entry name" value="Aspartic_peptidase_AS"/>
</dbReference>
<dbReference type="InterPro" id="IPR034161">
    <property type="entry name" value="Pepsin-like_plant"/>
</dbReference>
<dbReference type="InterPro" id="IPR033121">
    <property type="entry name" value="PEPTIDASE_A1"/>
</dbReference>
<dbReference type="InterPro" id="IPR021109">
    <property type="entry name" value="Peptidase_aspartic_dom_sf"/>
</dbReference>
<dbReference type="InterPro" id="IPR051708">
    <property type="entry name" value="Plant_Aspart_Prot_A1"/>
</dbReference>
<dbReference type="InterPro" id="IPR032799">
    <property type="entry name" value="TAXi_C"/>
</dbReference>
<dbReference type="InterPro" id="IPR032861">
    <property type="entry name" value="TAXi_N"/>
</dbReference>
<dbReference type="PANTHER" id="PTHR47967:SF66">
    <property type="entry name" value="ASPARTIC PROTEINASE CDR1-RELATED"/>
    <property type="match status" value="1"/>
</dbReference>
<dbReference type="PANTHER" id="PTHR47967">
    <property type="entry name" value="OS07G0603500 PROTEIN-RELATED"/>
    <property type="match status" value="1"/>
</dbReference>
<dbReference type="Pfam" id="PF14541">
    <property type="entry name" value="TAXi_C"/>
    <property type="match status" value="1"/>
</dbReference>
<dbReference type="Pfam" id="PF14543">
    <property type="entry name" value="TAXi_N"/>
    <property type="match status" value="1"/>
</dbReference>
<dbReference type="SUPFAM" id="SSF50630">
    <property type="entry name" value="Acid proteases"/>
    <property type="match status" value="1"/>
</dbReference>
<dbReference type="PROSITE" id="PS00141">
    <property type="entry name" value="ASP_PROTEASE"/>
    <property type="match status" value="2"/>
</dbReference>
<dbReference type="PROSITE" id="PS51767">
    <property type="entry name" value="PEPTIDASE_A1"/>
    <property type="match status" value="1"/>
</dbReference>
<evidence type="ECO:0000255" key="1"/>
<evidence type="ECO:0000255" key="2">
    <source>
        <dbReference type="PROSITE-ProRule" id="PRU01103"/>
    </source>
</evidence>
<evidence type="ECO:0000255" key="3">
    <source>
        <dbReference type="PROSITE-ProRule" id="PRU10094"/>
    </source>
</evidence>
<evidence type="ECO:0000269" key="4">
    <source>
    </source>
</evidence>
<evidence type="ECO:0000305" key="5"/>
<evidence type="ECO:0000305" key="6">
    <source>
    </source>
</evidence>
<comment type="function">
    <text evidence="4">Involved in salicylic acid-dependent inducible resistance responses. May release an endogenous peptide elicitor required for the activation of inducible resistance mechanisms. Possesses protease activity in vitro.</text>
</comment>
<comment type="subcellular location">
    <subcellularLocation>
        <location evidence="4">Secreted</location>
        <location evidence="4">Extracellular space</location>
        <location evidence="4">Apoplast</location>
    </subcellularLocation>
</comment>
<comment type="miscellaneous">
    <text evidence="6">Gain-of-function mutant CDR1-D (T-DNA tagging) shows a dwarf phenotype with dark and curled leaves, constitutive expression of the pathogenesis-related genes PR1 and PR2, and resistance to virulent Pseudomonas syringae.</text>
</comment>
<comment type="similarity">
    <text evidence="5">Belongs to the peptidase A1 family.</text>
</comment>
<comment type="sequence caution" evidence="5">
    <conflict type="erroneous termination">
        <sequence resource="EMBL-CDS" id="ABK28718"/>
    </conflict>
    <text>Extended C-terminus.</text>
</comment>
<proteinExistence type="evidence at protein level"/>
<organism>
    <name type="scientific">Arabidopsis thaliana</name>
    <name type="common">Mouse-ear cress</name>
    <dbReference type="NCBI Taxonomy" id="3702"/>
    <lineage>
        <taxon>Eukaryota</taxon>
        <taxon>Viridiplantae</taxon>
        <taxon>Streptophyta</taxon>
        <taxon>Embryophyta</taxon>
        <taxon>Tracheophyta</taxon>
        <taxon>Spermatophyta</taxon>
        <taxon>Magnoliopsida</taxon>
        <taxon>eudicotyledons</taxon>
        <taxon>Gunneridae</taxon>
        <taxon>Pentapetalae</taxon>
        <taxon>rosids</taxon>
        <taxon>malvids</taxon>
        <taxon>Brassicales</taxon>
        <taxon>Brassicaceae</taxon>
        <taxon>Camelineae</taxon>
        <taxon>Arabidopsis</taxon>
    </lineage>
</organism>
<name>CDR1_ARATH</name>
<accession>Q6XBF8</accession>
<accession>A0MFJ0</accession>
<keyword id="KW-0052">Apoplast</keyword>
<keyword id="KW-0064">Aspartyl protease</keyword>
<keyword id="KW-0325">Glycoprotein</keyword>
<keyword id="KW-0378">Hydrolase</keyword>
<keyword id="KW-0611">Plant defense</keyword>
<keyword id="KW-0645">Protease</keyword>
<keyword id="KW-1185">Reference proteome</keyword>
<keyword id="KW-0964">Secreted</keyword>
<keyword id="KW-0732">Signal</keyword>
<keyword id="KW-0865">Zymogen</keyword>
<sequence length="437" mass="46819">MASLFSSVLLSLCLLSSLFLSNANAKPKLGFTADLIHRDSPKSPFYNPMETSSQRLRNAIHRSVNRVFHFTEKDNTPQPQIDLTSNSGEYLMNVSIGTPPFPIMAIADTGSDLLWTQCAPCDDCYTQVDPLFDPKTSSTYKDVSCSSSQCTALENQASCSTNDNTCSYSLSYGDNSYTKGNIAVDTLTLGSSDTRPMQLKNIIIGCGHNNAGTFNKKGSGIVGLGGGPVSLIKQLGDSIDGKFSYCLVPLTSKKDQTSKINFGTNAIVSGSGVVSTPLIAKASQETFYYLTLKSISVGSKQIQYSGSDSESSEGNIIIDSGTTLTLLPTEFYSELEDAVASSIDAEKKQDPQSGLSLCYSATGDLKVPVITMHFDGADVKLDSSNAFVQVSEDLVCFAFRGSPSFSIYGNVAQMNFLVGYDTVSKTVSFKPTDCAKM</sequence>
<feature type="signal peptide" evidence="1">
    <location>
        <begin position="1"/>
        <end position="25"/>
    </location>
</feature>
<feature type="propeptide" id="PRO_0000420633" description="Activation peptide" evidence="1">
    <location>
        <begin position="26"/>
        <end position="73"/>
    </location>
</feature>
<feature type="chain" id="PRO_0000420634" description="Aspartic proteinase CDR1">
    <location>
        <begin position="74"/>
        <end position="437"/>
    </location>
</feature>
<feature type="domain" description="Peptidase A1" evidence="2">
    <location>
        <begin position="90"/>
        <end position="430"/>
    </location>
</feature>
<feature type="active site" evidence="3">
    <location>
        <position position="108"/>
    </location>
</feature>
<feature type="active site" evidence="3">
    <location>
        <position position="319"/>
    </location>
</feature>
<feature type="glycosylation site" description="N-linked (GlcNAc...) asparagine" evidence="1">
    <location>
        <position position="93"/>
    </location>
</feature>
<feature type="mutagenesis site" description="Loss of function." evidence="4">
    <original>D</original>
    <variation>N</variation>
    <location>
        <position position="108"/>
    </location>
</feature>
<feature type="mutagenesis site" description="Loss of function." evidence="4">
    <original>D</original>
    <variation>N</variation>
    <location>
        <position position="319"/>
    </location>
</feature>
<reference key="1">
    <citation type="journal article" date="2004" name="EMBO J.">
        <title>An extracellular aspartic protease functions in Arabidopsis disease resistance signaling.</title>
        <authorList>
            <person name="Xia Y."/>
            <person name="Suzuki H."/>
            <person name="Borevitz J."/>
            <person name="Blount J."/>
            <person name="Guo Z."/>
            <person name="Patel K."/>
            <person name="Dixon R.A."/>
            <person name="Lamb C."/>
        </authorList>
    </citation>
    <scope>NUCLEOTIDE SEQUENCE [MRNA]</scope>
    <scope>FUNCTION</scope>
    <scope>SUBCELLULAR LOCATION</scope>
    <scope>MUTAGENESIS OF ASP-108 AND ASP-319</scope>
</reference>
<reference key="2">
    <citation type="journal article" date="2000" name="Nature">
        <title>Sequence and analysis of chromosome 5 of the plant Arabidopsis thaliana.</title>
        <authorList>
            <person name="Tabata S."/>
            <person name="Kaneko T."/>
            <person name="Nakamura Y."/>
            <person name="Kotani H."/>
            <person name="Kato T."/>
            <person name="Asamizu E."/>
            <person name="Miyajima N."/>
            <person name="Sasamoto S."/>
            <person name="Kimura T."/>
            <person name="Hosouchi T."/>
            <person name="Kawashima K."/>
            <person name="Kohara M."/>
            <person name="Matsumoto M."/>
            <person name="Matsuno A."/>
            <person name="Muraki A."/>
            <person name="Nakayama S."/>
            <person name="Nakazaki N."/>
            <person name="Naruo K."/>
            <person name="Okumura S."/>
            <person name="Shinpo S."/>
            <person name="Takeuchi C."/>
            <person name="Wada T."/>
            <person name="Watanabe A."/>
            <person name="Yamada M."/>
            <person name="Yasuda M."/>
            <person name="Sato S."/>
            <person name="de la Bastide M."/>
            <person name="Huang E."/>
            <person name="Spiegel L."/>
            <person name="Gnoj L."/>
            <person name="O'Shaughnessy A."/>
            <person name="Preston R."/>
            <person name="Habermann K."/>
            <person name="Murray J."/>
            <person name="Johnson D."/>
            <person name="Rohlfing T."/>
            <person name="Nelson J."/>
            <person name="Stoneking T."/>
            <person name="Pepin K."/>
            <person name="Spieth J."/>
            <person name="Sekhon M."/>
            <person name="Armstrong J."/>
            <person name="Becker M."/>
            <person name="Belter E."/>
            <person name="Cordum H."/>
            <person name="Cordes M."/>
            <person name="Courtney L."/>
            <person name="Courtney W."/>
            <person name="Dante M."/>
            <person name="Du H."/>
            <person name="Edwards J."/>
            <person name="Fryman J."/>
            <person name="Haakensen B."/>
            <person name="Lamar E."/>
            <person name="Latreille P."/>
            <person name="Leonard S."/>
            <person name="Meyer R."/>
            <person name="Mulvaney E."/>
            <person name="Ozersky P."/>
            <person name="Riley A."/>
            <person name="Strowmatt C."/>
            <person name="Wagner-McPherson C."/>
            <person name="Wollam A."/>
            <person name="Yoakum M."/>
            <person name="Bell M."/>
            <person name="Dedhia N."/>
            <person name="Parnell L."/>
            <person name="Shah R."/>
            <person name="Rodriguez M."/>
            <person name="Hoon See L."/>
            <person name="Vil D."/>
            <person name="Baker J."/>
            <person name="Kirchoff K."/>
            <person name="Toth K."/>
            <person name="King L."/>
            <person name="Bahret A."/>
            <person name="Miller B."/>
            <person name="Marra M.A."/>
            <person name="Martienssen R."/>
            <person name="McCombie W.R."/>
            <person name="Wilson R.K."/>
            <person name="Murphy G."/>
            <person name="Bancroft I."/>
            <person name="Volckaert G."/>
            <person name="Wambutt R."/>
            <person name="Duesterhoeft A."/>
            <person name="Stiekema W."/>
            <person name="Pohl T."/>
            <person name="Entian K.-D."/>
            <person name="Terryn N."/>
            <person name="Hartley N."/>
            <person name="Bent E."/>
            <person name="Johnson S."/>
            <person name="Langham S.-A."/>
            <person name="McCullagh B."/>
            <person name="Robben J."/>
            <person name="Grymonprez B."/>
            <person name="Zimmermann W."/>
            <person name="Ramsperger U."/>
            <person name="Wedler H."/>
            <person name="Balke K."/>
            <person name="Wedler E."/>
            <person name="Peters S."/>
            <person name="van Staveren M."/>
            <person name="Dirkse W."/>
            <person name="Mooijman P."/>
            <person name="Klein Lankhorst R."/>
            <person name="Weitzenegger T."/>
            <person name="Bothe G."/>
            <person name="Rose M."/>
            <person name="Hauf J."/>
            <person name="Berneiser S."/>
            <person name="Hempel S."/>
            <person name="Feldpausch M."/>
            <person name="Lamberth S."/>
            <person name="Villarroel R."/>
            <person name="Gielen J."/>
            <person name="Ardiles W."/>
            <person name="Bents O."/>
            <person name="Lemcke K."/>
            <person name="Kolesov G."/>
            <person name="Mayer K.F.X."/>
            <person name="Rudd S."/>
            <person name="Schoof H."/>
            <person name="Schueller C."/>
            <person name="Zaccaria P."/>
            <person name="Mewes H.-W."/>
            <person name="Bevan M."/>
            <person name="Fransz P.F."/>
        </authorList>
    </citation>
    <scope>NUCLEOTIDE SEQUENCE [LARGE SCALE GENOMIC DNA]</scope>
    <source>
        <strain>cv. Columbia</strain>
    </source>
</reference>
<reference key="3">
    <citation type="journal article" date="2017" name="Plant J.">
        <title>Araport11: a complete reannotation of the Arabidopsis thaliana reference genome.</title>
        <authorList>
            <person name="Cheng C.Y."/>
            <person name="Krishnakumar V."/>
            <person name="Chan A.P."/>
            <person name="Thibaud-Nissen F."/>
            <person name="Schobel S."/>
            <person name="Town C.D."/>
        </authorList>
    </citation>
    <scope>GENOME REANNOTATION</scope>
    <source>
        <strain>cv. Columbia</strain>
    </source>
</reference>
<reference key="4">
    <citation type="journal article" date="2006" name="Plant Biotechnol. J.">
        <title>Simultaneous high-throughput recombinational cloning of open reading frames in closed and open configurations.</title>
        <authorList>
            <person name="Underwood B.A."/>
            <person name="Vanderhaeghen R."/>
            <person name="Whitford R."/>
            <person name="Town C.D."/>
            <person name="Hilson P."/>
        </authorList>
    </citation>
    <scope>NUCLEOTIDE SEQUENCE [LARGE SCALE MRNA]</scope>
    <source>
        <strain>cv. Columbia</strain>
    </source>
</reference>
<reference key="5">
    <citation type="submission" date="2006-07" db="EMBL/GenBank/DDBJ databases">
        <title>Arabidopsis ORF clones.</title>
        <authorList>
            <person name="Kim C.J."/>
            <person name="Chen H."/>
            <person name="Quinitio C."/>
            <person name="Shinn P."/>
            <person name="Ecker J.R."/>
        </authorList>
    </citation>
    <scope>NUCLEOTIDE SEQUENCE [LARGE SCALE MRNA]</scope>
    <source>
        <strain>cv. Columbia</strain>
    </source>
</reference>
<protein>
    <recommendedName>
        <fullName>Aspartic proteinase CDR1</fullName>
        <ecNumber>3.4.23.-</ecNumber>
    </recommendedName>
    <alternativeName>
        <fullName>Protein CONSTITUTIVE DISEASE RESISTANCE 1</fullName>
    </alternativeName>
</protein>
<gene>
    <name type="primary">CDR1</name>
    <name type="ordered locus">At5g33340</name>
    <name type="ORF">F19N2.60</name>
</gene>